<keyword id="KW-0131">Cell cycle</keyword>
<keyword id="KW-0132">Cell division</keyword>
<keyword id="KW-0159">Chromosome partition</keyword>
<keyword id="KW-0963">Cytoplasm</keyword>
<keyword id="KW-0229">DNA integration</keyword>
<keyword id="KW-0233">DNA recombination</keyword>
<keyword id="KW-0238">DNA-binding</keyword>
<keyword id="KW-1185">Reference proteome</keyword>
<comment type="function">
    <text evidence="1">Site-specific tyrosine recombinase, which acts by catalyzing the cutting and rejoining of the recombining DNA molecules. The XerC-XerD complex is essential to convert dimers of the bacterial chromosome into monomers to permit their segregation at cell division. It also contributes to the segregational stability of plasmids.</text>
</comment>
<comment type="subunit">
    <text evidence="1">Forms a cyclic heterotetrameric complex composed of two molecules of XerC and two molecules of XerD.</text>
</comment>
<comment type="subcellular location">
    <subcellularLocation>
        <location evidence="1">Cytoplasm</location>
    </subcellularLocation>
</comment>
<comment type="similarity">
    <text evidence="1">Belongs to the 'phage' integrase family. XerD subfamily.</text>
</comment>
<accession>Q9A437</accession>
<dbReference type="EMBL" id="AE005673">
    <property type="protein sequence ID" value="AAK24968.1"/>
    <property type="molecule type" value="Genomic_DNA"/>
</dbReference>
<dbReference type="PIR" id="D87621">
    <property type="entry name" value="D87621"/>
</dbReference>
<dbReference type="RefSeq" id="NP_421800.1">
    <property type="nucleotide sequence ID" value="NC_002696.2"/>
</dbReference>
<dbReference type="RefSeq" id="WP_010920842.1">
    <property type="nucleotide sequence ID" value="NC_002696.2"/>
</dbReference>
<dbReference type="SMR" id="Q9A437"/>
<dbReference type="STRING" id="190650.CC_3006"/>
<dbReference type="EnsemblBacteria" id="AAK24968">
    <property type="protein sequence ID" value="AAK24968"/>
    <property type="gene ID" value="CC_3006"/>
</dbReference>
<dbReference type="KEGG" id="ccr:CC_3006"/>
<dbReference type="PATRIC" id="fig|190650.5.peg.3012"/>
<dbReference type="eggNOG" id="COG4974">
    <property type="taxonomic scope" value="Bacteria"/>
</dbReference>
<dbReference type="HOGENOM" id="CLU_027562_9_0_5"/>
<dbReference type="BioCyc" id="CAULO:CC3006-MONOMER"/>
<dbReference type="Proteomes" id="UP000001816">
    <property type="component" value="Chromosome"/>
</dbReference>
<dbReference type="GO" id="GO:0005737">
    <property type="term" value="C:cytoplasm"/>
    <property type="evidence" value="ECO:0007669"/>
    <property type="project" value="UniProtKB-SubCell"/>
</dbReference>
<dbReference type="GO" id="GO:0003677">
    <property type="term" value="F:DNA binding"/>
    <property type="evidence" value="ECO:0007669"/>
    <property type="project" value="UniProtKB-KW"/>
</dbReference>
<dbReference type="GO" id="GO:0009037">
    <property type="term" value="F:tyrosine-based site-specific recombinase activity"/>
    <property type="evidence" value="ECO:0007669"/>
    <property type="project" value="UniProtKB-UniRule"/>
</dbReference>
<dbReference type="GO" id="GO:0051301">
    <property type="term" value="P:cell division"/>
    <property type="evidence" value="ECO:0007669"/>
    <property type="project" value="UniProtKB-KW"/>
</dbReference>
<dbReference type="GO" id="GO:0007059">
    <property type="term" value="P:chromosome segregation"/>
    <property type="evidence" value="ECO:0007669"/>
    <property type="project" value="UniProtKB-UniRule"/>
</dbReference>
<dbReference type="GO" id="GO:0006313">
    <property type="term" value="P:DNA transposition"/>
    <property type="evidence" value="ECO:0007669"/>
    <property type="project" value="UniProtKB-UniRule"/>
</dbReference>
<dbReference type="CDD" id="cd00798">
    <property type="entry name" value="INT_XerDC_C"/>
    <property type="match status" value="1"/>
</dbReference>
<dbReference type="Gene3D" id="1.10.150.130">
    <property type="match status" value="1"/>
</dbReference>
<dbReference type="Gene3D" id="1.10.443.10">
    <property type="entry name" value="Intergrase catalytic core"/>
    <property type="match status" value="1"/>
</dbReference>
<dbReference type="HAMAP" id="MF_01808">
    <property type="entry name" value="Recomb_XerC_XerD"/>
    <property type="match status" value="1"/>
</dbReference>
<dbReference type="HAMAP" id="MF_01807">
    <property type="entry name" value="Recomb_XerD"/>
    <property type="match status" value="1"/>
</dbReference>
<dbReference type="InterPro" id="IPR044068">
    <property type="entry name" value="CB"/>
</dbReference>
<dbReference type="InterPro" id="IPR011010">
    <property type="entry name" value="DNA_brk_join_enz"/>
</dbReference>
<dbReference type="InterPro" id="IPR013762">
    <property type="entry name" value="Integrase-like_cat_sf"/>
</dbReference>
<dbReference type="InterPro" id="IPR002104">
    <property type="entry name" value="Integrase_catalytic"/>
</dbReference>
<dbReference type="InterPro" id="IPR010998">
    <property type="entry name" value="Integrase_recombinase_N"/>
</dbReference>
<dbReference type="InterPro" id="IPR004107">
    <property type="entry name" value="Integrase_SAM-like_N"/>
</dbReference>
<dbReference type="InterPro" id="IPR011932">
    <property type="entry name" value="Recomb_XerD"/>
</dbReference>
<dbReference type="InterPro" id="IPR023009">
    <property type="entry name" value="Tyrosine_recombinase_XerC/XerD"/>
</dbReference>
<dbReference type="InterPro" id="IPR050090">
    <property type="entry name" value="Tyrosine_recombinase_XerCD"/>
</dbReference>
<dbReference type="NCBIfam" id="NF001399">
    <property type="entry name" value="PRK00283.1"/>
    <property type="match status" value="1"/>
</dbReference>
<dbReference type="PANTHER" id="PTHR30349">
    <property type="entry name" value="PHAGE INTEGRASE-RELATED"/>
    <property type="match status" value="1"/>
</dbReference>
<dbReference type="PANTHER" id="PTHR30349:SF90">
    <property type="entry name" value="TYROSINE RECOMBINASE XERD"/>
    <property type="match status" value="1"/>
</dbReference>
<dbReference type="Pfam" id="PF02899">
    <property type="entry name" value="Phage_int_SAM_1"/>
    <property type="match status" value="1"/>
</dbReference>
<dbReference type="Pfam" id="PF00589">
    <property type="entry name" value="Phage_integrase"/>
    <property type="match status" value="1"/>
</dbReference>
<dbReference type="SUPFAM" id="SSF56349">
    <property type="entry name" value="DNA breaking-rejoining enzymes"/>
    <property type="match status" value="1"/>
</dbReference>
<dbReference type="PROSITE" id="PS51900">
    <property type="entry name" value="CB"/>
    <property type="match status" value="1"/>
</dbReference>
<dbReference type="PROSITE" id="PS51898">
    <property type="entry name" value="TYR_RECOMBINASE"/>
    <property type="match status" value="1"/>
</dbReference>
<organism>
    <name type="scientific">Caulobacter vibrioides (strain ATCC 19089 / CIP 103742 / CB 15)</name>
    <name type="common">Caulobacter crescentus</name>
    <dbReference type="NCBI Taxonomy" id="190650"/>
    <lineage>
        <taxon>Bacteria</taxon>
        <taxon>Pseudomonadati</taxon>
        <taxon>Pseudomonadota</taxon>
        <taxon>Alphaproteobacteria</taxon>
        <taxon>Caulobacterales</taxon>
        <taxon>Caulobacteraceae</taxon>
        <taxon>Caulobacter</taxon>
    </lineage>
</organism>
<gene>
    <name evidence="1" type="primary">xerD</name>
    <name type="ordered locus">CC_3006</name>
</gene>
<proteinExistence type="inferred from homology"/>
<name>XERD_CAUVC</name>
<evidence type="ECO:0000255" key="1">
    <source>
        <dbReference type="HAMAP-Rule" id="MF_01807"/>
    </source>
</evidence>
<evidence type="ECO:0000255" key="2">
    <source>
        <dbReference type="PROSITE-ProRule" id="PRU01246"/>
    </source>
</evidence>
<evidence type="ECO:0000255" key="3">
    <source>
        <dbReference type="PROSITE-ProRule" id="PRU01248"/>
    </source>
</evidence>
<sequence length="305" mass="33194">MSQGEAWADAFLEMMAVERAAARNTLTAYGKDLEDARGFLSRSGHDLHDADAETIEAYFQDLGARGLSPATAARRRSAVRQFYRFVLGEGWRTDDPSRRVAAPKAGRPLPKVLERDEIERLLAAASAKDSAQGLRLACMIELIYASGLRISELLALPLLALARDPAYLIVKGKGGKERLAPLNDAARAAVKAYLVERPAFLPKGQKDSPWLFPSRGATGRLTPRRVGQLLEDAAIAAGIDRQKVSPHVLRHAFATHLLEGGADLRVIQTLLGHADIATTQIYTHVAGEHLAHIVQTKHPLGRKKG</sequence>
<protein>
    <recommendedName>
        <fullName evidence="1">Tyrosine recombinase XerD</fullName>
    </recommendedName>
</protein>
<feature type="chain" id="PRO_0000095378" description="Tyrosine recombinase XerD">
    <location>
        <begin position="1"/>
        <end position="305"/>
    </location>
</feature>
<feature type="domain" description="Core-binding (CB)" evidence="3">
    <location>
        <begin position="2"/>
        <end position="87"/>
    </location>
</feature>
<feature type="domain" description="Tyr recombinase" evidence="2">
    <location>
        <begin position="108"/>
        <end position="295"/>
    </location>
</feature>
<feature type="active site" evidence="1">
    <location>
        <position position="149"/>
    </location>
</feature>
<feature type="active site" evidence="1">
    <location>
        <position position="173"/>
    </location>
</feature>
<feature type="active site" evidence="1">
    <location>
        <position position="247"/>
    </location>
</feature>
<feature type="active site" evidence="1">
    <location>
        <position position="250"/>
    </location>
</feature>
<feature type="active site" evidence="1">
    <location>
        <position position="273"/>
    </location>
</feature>
<feature type="active site" description="O-(3'-phospho-DNA)-tyrosine intermediate" evidence="1">
    <location>
        <position position="282"/>
    </location>
</feature>
<reference key="1">
    <citation type="journal article" date="2001" name="Proc. Natl. Acad. Sci. U.S.A.">
        <title>Complete genome sequence of Caulobacter crescentus.</title>
        <authorList>
            <person name="Nierman W.C."/>
            <person name="Feldblyum T.V."/>
            <person name="Laub M.T."/>
            <person name="Paulsen I.T."/>
            <person name="Nelson K.E."/>
            <person name="Eisen J.A."/>
            <person name="Heidelberg J.F."/>
            <person name="Alley M.R.K."/>
            <person name="Ohta N."/>
            <person name="Maddock J.R."/>
            <person name="Potocka I."/>
            <person name="Nelson W.C."/>
            <person name="Newton A."/>
            <person name="Stephens C."/>
            <person name="Phadke N.D."/>
            <person name="Ely B."/>
            <person name="DeBoy R.T."/>
            <person name="Dodson R.J."/>
            <person name="Durkin A.S."/>
            <person name="Gwinn M.L."/>
            <person name="Haft D.H."/>
            <person name="Kolonay J.F."/>
            <person name="Smit J."/>
            <person name="Craven M.B."/>
            <person name="Khouri H.M."/>
            <person name="Shetty J."/>
            <person name="Berry K.J."/>
            <person name="Utterback T.R."/>
            <person name="Tran K."/>
            <person name="Wolf A.M."/>
            <person name="Vamathevan J.J."/>
            <person name="Ermolaeva M.D."/>
            <person name="White O."/>
            <person name="Salzberg S.L."/>
            <person name="Venter J.C."/>
            <person name="Shapiro L."/>
            <person name="Fraser C.M."/>
        </authorList>
    </citation>
    <scope>NUCLEOTIDE SEQUENCE [LARGE SCALE GENOMIC DNA]</scope>
    <source>
        <strain>ATCC 19089 / CIP 103742 / CB 15</strain>
    </source>
</reference>